<organism>
    <name type="scientific">Synechococcus elongatus (strain ATCC 33912 / PCC 7942 / FACHB-805)</name>
    <name type="common">Anacystis nidulans R2</name>
    <dbReference type="NCBI Taxonomy" id="1140"/>
    <lineage>
        <taxon>Bacteria</taxon>
        <taxon>Bacillati</taxon>
        <taxon>Cyanobacteriota</taxon>
        <taxon>Cyanophyceae</taxon>
        <taxon>Synechococcales</taxon>
        <taxon>Synechococcaceae</taxon>
        <taxon>Synechococcus</taxon>
    </lineage>
</organism>
<feature type="chain" id="PRO_0000341874" description="2-succinyl-5-enolpyruvyl-6-hydroxy-3-cyclohexene-1-carboxylate synthase">
    <location>
        <begin position="1"/>
        <end position="582"/>
    </location>
</feature>
<keyword id="KW-0460">Magnesium</keyword>
<keyword id="KW-0464">Manganese</keyword>
<keyword id="KW-0479">Metal-binding</keyword>
<keyword id="KW-1185">Reference proteome</keyword>
<keyword id="KW-0786">Thiamine pyrophosphate</keyword>
<keyword id="KW-0808">Transferase</keyword>
<reference key="1">
    <citation type="submission" date="2005-08" db="EMBL/GenBank/DDBJ databases">
        <title>Complete sequence of chromosome 1 of Synechococcus elongatus PCC 7942.</title>
        <authorList>
            <consortium name="US DOE Joint Genome Institute"/>
            <person name="Copeland A."/>
            <person name="Lucas S."/>
            <person name="Lapidus A."/>
            <person name="Barry K."/>
            <person name="Detter J.C."/>
            <person name="Glavina T."/>
            <person name="Hammon N."/>
            <person name="Israni S."/>
            <person name="Pitluck S."/>
            <person name="Schmutz J."/>
            <person name="Larimer F."/>
            <person name="Land M."/>
            <person name="Kyrpides N."/>
            <person name="Lykidis A."/>
            <person name="Golden S."/>
            <person name="Richardson P."/>
        </authorList>
    </citation>
    <scope>NUCLEOTIDE SEQUENCE [LARGE SCALE GENOMIC DNA]</scope>
    <source>
        <strain>ATCC 33912 / PCC 7942 / FACHB-805</strain>
    </source>
</reference>
<protein>
    <recommendedName>
        <fullName evidence="1">2-succinyl-5-enolpyruvyl-6-hydroxy-3-cyclohexene-1-carboxylate synthase</fullName>
        <shortName evidence="1">SEPHCHC synthase</shortName>
        <ecNumber evidence="1">2.2.1.9</ecNumber>
    </recommendedName>
</protein>
<comment type="function">
    <text evidence="1">Catalyzes the thiamine diphosphate-dependent decarboxylation of 2-oxoglutarate and the subsequent addition of the resulting succinic semialdehyde-thiamine pyrophosphate anion to isochorismate to yield 2-succinyl-5-enolpyruvyl-6-hydroxy-3-cyclohexene-1-carboxylate (SEPHCHC).</text>
</comment>
<comment type="catalytic activity">
    <reaction evidence="1">
        <text>isochorismate + 2-oxoglutarate + H(+) = 5-enolpyruvoyl-6-hydroxy-2-succinyl-cyclohex-3-ene-1-carboxylate + CO2</text>
        <dbReference type="Rhea" id="RHEA:25593"/>
        <dbReference type="ChEBI" id="CHEBI:15378"/>
        <dbReference type="ChEBI" id="CHEBI:16526"/>
        <dbReference type="ChEBI" id="CHEBI:16810"/>
        <dbReference type="ChEBI" id="CHEBI:29780"/>
        <dbReference type="ChEBI" id="CHEBI:58818"/>
        <dbReference type="EC" id="2.2.1.9"/>
    </reaction>
</comment>
<comment type="cofactor">
    <cofactor evidence="1">
        <name>Mg(2+)</name>
        <dbReference type="ChEBI" id="CHEBI:18420"/>
    </cofactor>
    <cofactor evidence="1">
        <name>Mn(2+)</name>
        <dbReference type="ChEBI" id="CHEBI:29035"/>
    </cofactor>
</comment>
<comment type="cofactor">
    <cofactor evidence="1">
        <name>thiamine diphosphate</name>
        <dbReference type="ChEBI" id="CHEBI:58937"/>
    </cofactor>
    <text evidence="1">Binds 1 thiamine pyrophosphate per subunit.</text>
</comment>
<comment type="pathway">
    <text evidence="1">Quinol/quinone metabolism; 1,4-dihydroxy-2-naphthoate biosynthesis; 1,4-dihydroxy-2-naphthoate from chorismate: step 2/7.</text>
</comment>
<comment type="pathway">
    <text evidence="1">Cofactor biosynthesis; phylloquinone biosynthesis.</text>
</comment>
<comment type="subunit">
    <text evidence="1">Homodimer.</text>
</comment>
<comment type="similarity">
    <text evidence="1">Belongs to the TPP enzyme family. MenD subfamily.</text>
</comment>
<proteinExistence type="inferred from homology"/>
<name>MEND_SYNE7</name>
<accession>Q31NA4</accession>
<dbReference type="EC" id="2.2.1.9" evidence="1"/>
<dbReference type="EMBL" id="CP000100">
    <property type="protein sequence ID" value="ABB57465.1"/>
    <property type="molecule type" value="Genomic_DNA"/>
</dbReference>
<dbReference type="RefSeq" id="WP_011242435.1">
    <property type="nucleotide sequence ID" value="NZ_JACJTX010000004.1"/>
</dbReference>
<dbReference type="SMR" id="Q31NA4"/>
<dbReference type="STRING" id="1140.Synpcc7942_1435"/>
<dbReference type="PaxDb" id="1140-Synpcc7942_1435"/>
<dbReference type="GeneID" id="72430298"/>
<dbReference type="KEGG" id="syf:Synpcc7942_1435"/>
<dbReference type="eggNOG" id="COG1165">
    <property type="taxonomic scope" value="Bacteria"/>
</dbReference>
<dbReference type="HOGENOM" id="CLU_006051_3_0_3"/>
<dbReference type="OrthoDB" id="9791859at2"/>
<dbReference type="BioCyc" id="SYNEL:SYNPCC7942_1435-MONOMER"/>
<dbReference type="UniPathway" id="UPA00995"/>
<dbReference type="UniPathway" id="UPA01057">
    <property type="reaction ID" value="UER00164"/>
</dbReference>
<dbReference type="Proteomes" id="UP000889800">
    <property type="component" value="Chromosome"/>
</dbReference>
<dbReference type="GO" id="GO:0070204">
    <property type="term" value="F:2-succinyl-5-enolpyruvyl-6-hydroxy-3-cyclohexene-1-carboxylic-acid synthase activity"/>
    <property type="evidence" value="ECO:0007669"/>
    <property type="project" value="UniProtKB-UniRule"/>
</dbReference>
<dbReference type="GO" id="GO:0000287">
    <property type="term" value="F:magnesium ion binding"/>
    <property type="evidence" value="ECO:0007669"/>
    <property type="project" value="UniProtKB-UniRule"/>
</dbReference>
<dbReference type="GO" id="GO:0030145">
    <property type="term" value="F:manganese ion binding"/>
    <property type="evidence" value="ECO:0007669"/>
    <property type="project" value="UniProtKB-UniRule"/>
</dbReference>
<dbReference type="GO" id="GO:0030976">
    <property type="term" value="F:thiamine pyrophosphate binding"/>
    <property type="evidence" value="ECO:0007669"/>
    <property type="project" value="UniProtKB-UniRule"/>
</dbReference>
<dbReference type="GO" id="GO:0009234">
    <property type="term" value="P:menaquinone biosynthetic process"/>
    <property type="evidence" value="ECO:0007669"/>
    <property type="project" value="InterPro"/>
</dbReference>
<dbReference type="GO" id="GO:0042372">
    <property type="term" value="P:phylloquinone biosynthetic process"/>
    <property type="evidence" value="ECO:0007669"/>
    <property type="project" value="UniProtKB-UniRule"/>
</dbReference>
<dbReference type="CDD" id="cd07037">
    <property type="entry name" value="TPP_PYR_MenD"/>
    <property type="match status" value="1"/>
</dbReference>
<dbReference type="CDD" id="cd02009">
    <property type="entry name" value="TPP_SHCHC_synthase"/>
    <property type="match status" value="1"/>
</dbReference>
<dbReference type="Gene3D" id="3.40.50.970">
    <property type="match status" value="2"/>
</dbReference>
<dbReference type="Gene3D" id="3.40.50.1220">
    <property type="entry name" value="TPP-binding domain"/>
    <property type="match status" value="1"/>
</dbReference>
<dbReference type="HAMAP" id="MF_01659">
    <property type="entry name" value="MenD"/>
    <property type="match status" value="1"/>
</dbReference>
<dbReference type="InterPro" id="IPR004433">
    <property type="entry name" value="MenaQ_synth_MenD"/>
</dbReference>
<dbReference type="InterPro" id="IPR032264">
    <property type="entry name" value="MenD_middle"/>
</dbReference>
<dbReference type="InterPro" id="IPR029061">
    <property type="entry name" value="THDP-binding"/>
</dbReference>
<dbReference type="InterPro" id="IPR012001">
    <property type="entry name" value="Thiamin_PyroP_enz_TPP-bd_dom"/>
</dbReference>
<dbReference type="InterPro" id="IPR011766">
    <property type="entry name" value="TPP_enzyme_TPP-bd"/>
</dbReference>
<dbReference type="NCBIfam" id="TIGR00173">
    <property type="entry name" value="menD"/>
    <property type="match status" value="1"/>
</dbReference>
<dbReference type="PANTHER" id="PTHR42916">
    <property type="entry name" value="2-SUCCINYL-5-ENOLPYRUVYL-6-HYDROXY-3-CYCLOHEXENE-1-CARBOXYLATE SYNTHASE"/>
    <property type="match status" value="1"/>
</dbReference>
<dbReference type="PANTHER" id="PTHR42916:SF1">
    <property type="entry name" value="PROTEIN PHYLLO, CHLOROPLASTIC"/>
    <property type="match status" value="1"/>
</dbReference>
<dbReference type="Pfam" id="PF02775">
    <property type="entry name" value="TPP_enzyme_C"/>
    <property type="match status" value="1"/>
</dbReference>
<dbReference type="Pfam" id="PF16582">
    <property type="entry name" value="TPP_enzyme_M_2"/>
    <property type="match status" value="1"/>
</dbReference>
<dbReference type="Pfam" id="PF02776">
    <property type="entry name" value="TPP_enzyme_N"/>
    <property type="match status" value="1"/>
</dbReference>
<dbReference type="PIRSF" id="PIRSF004983">
    <property type="entry name" value="MenD"/>
    <property type="match status" value="1"/>
</dbReference>
<dbReference type="SUPFAM" id="SSF52518">
    <property type="entry name" value="Thiamin diphosphate-binding fold (THDP-binding)"/>
    <property type="match status" value="2"/>
</dbReference>
<gene>
    <name evidence="1" type="primary">menD</name>
    <name type="ordered locus">Synpcc7942_1435</name>
</gene>
<sequence>MGQAAAITMPIDPRNLNTLWSSVLAESFVRLGLQTVVICPGSRSAPLAIAFAEHPEIDAIPILDERSAGFFALGRAKASHRPVALICSSGTAGANFYPAVIEAKESGVPLLVITADRPPELRQCHAGQAIDQLRLFGSYALWEAELALPVLDLGLLRYLRQTAQQAWQQALRGGPVHLNQPLREPLAPIADPATQTWLAQQWPGENFFAELLTAVPTPQIQQPLPPLPSQGLITVGPIAPEDPAAFVQAIAQLSAHLGWPVLSDAVTPLRQFADHCPRLISSYDLILRQPHWRASLQPEAVLQIGELPTSKELRLWLTEQTCPRWIVSPRPENFDPLHGSSHHLPVTVEAIAIPATIAPASDYSRQWQQAETAVQAAIAQHLAQVPDLTEPGIARLLSQHLPAQTPIFVANSTPIRDLEWFWLANDQRRSLYCSRGANGIDGTLSTAIGIAHQNRPSVLITGDLSLLHDSNGFLQRSQLQGHLTVVLIDNSGGGIFELLPIRDCGPSFEPFVATPQTVDFAALCQAYGVDYQAIATEAELIKAIQTLPTSGIRVLHLFTDRRQNAAWRRALFAELAAIPSQS</sequence>
<evidence type="ECO:0000255" key="1">
    <source>
        <dbReference type="HAMAP-Rule" id="MF_01659"/>
    </source>
</evidence>